<gene>
    <name type="primary">psaX</name>
</gene>
<name>PSAX_THEVL</name>
<feature type="chain" id="PRO_0000207776" description="Photosystem I 4.8 kDa protein">
    <location>
        <begin position="1"/>
        <end position="29" status="greater than"/>
    </location>
</feature>
<feature type="non-terminal residue">
    <location>
        <position position="29"/>
    </location>
</feature>
<keyword id="KW-0903">Direct protein sequencing</keyword>
<keyword id="KW-0602">Photosynthesis</keyword>
<keyword id="KW-0603">Photosystem I</keyword>
<organism>
    <name type="scientific">Thermostichus vulcanus</name>
    <name type="common">Synechococcus vulcanus</name>
    <dbReference type="NCBI Taxonomy" id="32053"/>
    <lineage>
        <taxon>Bacteria</taxon>
        <taxon>Bacillati</taxon>
        <taxon>Cyanobacteriota</taxon>
        <taxon>Cyanophyceae</taxon>
        <taxon>Thermostichales</taxon>
        <taxon>Thermostichaceae</taxon>
        <taxon>Thermostichus</taxon>
    </lineage>
</organism>
<comment type="similarity">
    <text evidence="1">Belongs to the PsaX family.</text>
</comment>
<proteinExistence type="evidence at protein level"/>
<reference key="1">
    <citation type="journal article" date="1989" name="FEBS Lett.">
        <title>Identification of photosystem I components from the cyanobacterium, Synechococcus vulcanus by N-terminal sequencing.</title>
        <authorList>
            <person name="Koike H."/>
            <person name="Ikeuchi M."/>
            <person name="Hiyama T."/>
            <person name="Inoue Y."/>
        </authorList>
    </citation>
    <scope>PROTEIN SEQUENCE</scope>
</reference>
<dbReference type="GO" id="GO:0009522">
    <property type="term" value="C:photosystem I"/>
    <property type="evidence" value="ECO:0007669"/>
    <property type="project" value="UniProtKB-KW"/>
</dbReference>
<dbReference type="GO" id="GO:0015979">
    <property type="term" value="P:photosynthesis"/>
    <property type="evidence" value="ECO:0007669"/>
    <property type="project" value="UniProtKB-KW"/>
</dbReference>
<dbReference type="InterPro" id="IPR012986">
    <property type="entry name" value="PSI_PsaX"/>
</dbReference>
<dbReference type="InterPro" id="IPR036243">
    <property type="entry name" value="PSI_PsaX_sf"/>
</dbReference>
<dbReference type="Pfam" id="PF08078">
    <property type="entry name" value="PsaX"/>
    <property type="match status" value="1"/>
</dbReference>
<dbReference type="SUPFAM" id="SSF81552">
    <property type="entry name" value="Subunit PsaX of photosystem I reaction centre"/>
    <property type="match status" value="1"/>
</dbReference>
<accession>P23320</accession>
<protein>
    <recommendedName>
        <fullName>Photosystem I 4.8 kDa protein</fullName>
    </recommendedName>
</protein>
<sequence>ATKSAKPTYAFRTFXAVLLLAINFLVAAY</sequence>
<evidence type="ECO:0000305" key="1"/>